<name>ACC1_ORYSJ</name>
<evidence type="ECO:0000250" key="1"/>
<evidence type="ECO:0000250" key="2">
    <source>
        <dbReference type="UniProtKB" id="O04983"/>
    </source>
</evidence>
<evidence type="ECO:0000250" key="3">
    <source>
        <dbReference type="UniProtKB" id="Q38970"/>
    </source>
</evidence>
<evidence type="ECO:0000255" key="4">
    <source>
        <dbReference type="PROSITE-ProRule" id="PRU00409"/>
    </source>
</evidence>
<evidence type="ECO:0000255" key="5">
    <source>
        <dbReference type="PROSITE-ProRule" id="PRU00969"/>
    </source>
</evidence>
<evidence type="ECO:0000255" key="6">
    <source>
        <dbReference type="PROSITE-ProRule" id="PRU01066"/>
    </source>
</evidence>
<evidence type="ECO:0000255" key="7">
    <source>
        <dbReference type="PROSITE-ProRule" id="PRU01136"/>
    </source>
</evidence>
<evidence type="ECO:0000255" key="8">
    <source>
        <dbReference type="PROSITE-ProRule" id="PRU01137"/>
    </source>
</evidence>
<evidence type="ECO:0000255" key="9">
    <source>
        <dbReference type="PROSITE-ProRule" id="PRU01138"/>
    </source>
</evidence>
<evidence type="ECO:0000305" key="10"/>
<comment type="function">
    <text evidence="3">Multifunctional enzyme that catalyzes the carboxylation of acetyl-CoA, forming malonyl-CoA, which is used in the plastid for fatty acid synthesis and in the cytosol in various biosynthetic pathways including fatty acid elongation.</text>
</comment>
<comment type="catalytic activity">
    <reaction evidence="2">
        <text>hydrogencarbonate + acetyl-CoA + ATP = malonyl-CoA + ADP + phosphate + H(+)</text>
        <dbReference type="Rhea" id="RHEA:11308"/>
        <dbReference type="ChEBI" id="CHEBI:15378"/>
        <dbReference type="ChEBI" id="CHEBI:17544"/>
        <dbReference type="ChEBI" id="CHEBI:30616"/>
        <dbReference type="ChEBI" id="CHEBI:43474"/>
        <dbReference type="ChEBI" id="CHEBI:57288"/>
        <dbReference type="ChEBI" id="CHEBI:57384"/>
        <dbReference type="ChEBI" id="CHEBI:456216"/>
        <dbReference type="EC" id="6.4.1.2"/>
    </reaction>
</comment>
<comment type="catalytic activity">
    <reaction evidence="2">
        <text>N(6)-biotinyl-L-lysyl-[protein] + hydrogencarbonate + ATP = N(6)-carboxybiotinyl-L-lysyl-[protein] + ADP + phosphate + H(+)</text>
        <dbReference type="Rhea" id="RHEA:13501"/>
        <dbReference type="Rhea" id="RHEA-COMP:10505"/>
        <dbReference type="Rhea" id="RHEA-COMP:10506"/>
        <dbReference type="ChEBI" id="CHEBI:15378"/>
        <dbReference type="ChEBI" id="CHEBI:17544"/>
        <dbReference type="ChEBI" id="CHEBI:30616"/>
        <dbReference type="ChEBI" id="CHEBI:43474"/>
        <dbReference type="ChEBI" id="CHEBI:83144"/>
        <dbReference type="ChEBI" id="CHEBI:83145"/>
        <dbReference type="ChEBI" id="CHEBI:456216"/>
        <dbReference type="EC" id="6.3.4.14"/>
    </reaction>
</comment>
<comment type="cofactor">
    <cofactor evidence="4 5">
        <name>Mg(2+)</name>
        <dbReference type="ChEBI" id="CHEBI:18420"/>
    </cofactor>
    <cofactor evidence="4 5">
        <name>Mn(2+)</name>
        <dbReference type="ChEBI" id="CHEBI:29035"/>
    </cofactor>
    <text evidence="4 5">Binds 2 magnesium or manganese ions per subunit.</text>
</comment>
<comment type="cofactor">
    <cofactor evidence="6">
        <name>biotin</name>
        <dbReference type="ChEBI" id="CHEBI:57586"/>
    </cofactor>
</comment>
<comment type="pathway">
    <text>Lipid metabolism; malonyl-CoA biosynthesis; malonyl-CoA from acetyl-CoA: step 1/1.</text>
</comment>
<comment type="subunit">
    <text evidence="10">Homodimer.</text>
</comment>
<comment type="subcellular location">
    <subcellularLocation>
        <location evidence="10">Cytoplasm</location>
        <location evidence="10">Cytosol</location>
    </subcellularLocation>
</comment>
<comment type="sequence caution" evidence="10">
    <conflict type="erroneous gene model prediction">
        <sequence resource="EMBL-CDS" id="AAP53321"/>
    </conflict>
</comment>
<comment type="sequence caution" evidence="10">
    <conflict type="erroneous gene model prediction">
        <sequence resource="EMBL-CDS" id="BAF26353"/>
    </conflict>
</comment>
<comment type="sequence caution" evidence="10">
    <conflict type="erroneous gene model prediction">
        <sequence resource="EMBL-CDS" id="EEE50826"/>
    </conflict>
</comment>
<accession>Q8S6N5</accession>
<accession>B9G5C9</accession>
<accession>Q0IY62</accession>
<accession>Q7G3D3</accession>
<organism>
    <name type="scientific">Oryza sativa subsp. japonica</name>
    <name type="common">Rice</name>
    <dbReference type="NCBI Taxonomy" id="39947"/>
    <lineage>
        <taxon>Eukaryota</taxon>
        <taxon>Viridiplantae</taxon>
        <taxon>Streptophyta</taxon>
        <taxon>Embryophyta</taxon>
        <taxon>Tracheophyta</taxon>
        <taxon>Spermatophyta</taxon>
        <taxon>Magnoliopsida</taxon>
        <taxon>Liliopsida</taxon>
        <taxon>Poales</taxon>
        <taxon>Poaceae</taxon>
        <taxon>BOP clade</taxon>
        <taxon>Oryzoideae</taxon>
        <taxon>Oryzeae</taxon>
        <taxon>Oryzinae</taxon>
        <taxon>Oryza</taxon>
        <taxon>Oryza sativa</taxon>
    </lineage>
</organism>
<dbReference type="EC" id="6.4.1.2"/>
<dbReference type="EC" id="6.3.4.14"/>
<dbReference type="EMBL" id="AC092548">
    <property type="protein sequence ID" value="AAM18728.1"/>
    <property type="molecule type" value="Genomic_DNA"/>
</dbReference>
<dbReference type="EMBL" id="DP000086">
    <property type="protein sequence ID" value="AAP53321.2"/>
    <property type="status" value="ALT_SEQ"/>
    <property type="molecule type" value="Genomic_DNA"/>
</dbReference>
<dbReference type="EMBL" id="AP008216">
    <property type="protein sequence ID" value="BAF26353.1"/>
    <property type="status" value="ALT_SEQ"/>
    <property type="molecule type" value="Genomic_DNA"/>
</dbReference>
<dbReference type="EMBL" id="AP014966">
    <property type="status" value="NOT_ANNOTATED_CDS"/>
    <property type="molecule type" value="Genomic_DNA"/>
</dbReference>
<dbReference type="EMBL" id="CM000147">
    <property type="protein sequence ID" value="EEE50826.1"/>
    <property type="status" value="ALT_SEQ"/>
    <property type="molecule type" value="Genomic_DNA"/>
</dbReference>
<dbReference type="SMR" id="Q8S6N5"/>
<dbReference type="BioGRID" id="817487">
    <property type="interactions" value="1"/>
</dbReference>
<dbReference type="FunCoup" id="Q8S6N5">
    <property type="interactions" value="1604"/>
</dbReference>
<dbReference type="STRING" id="39947.Q8S6N5"/>
<dbReference type="PaxDb" id="39947-Q8S6N5"/>
<dbReference type="EnsemblPlants" id="Os10t0363300-01">
    <property type="protein sequence ID" value="Os10t0363300-01"/>
    <property type="gene ID" value="Os10g0363300"/>
</dbReference>
<dbReference type="GeneID" id="4348450"/>
<dbReference type="Gramene" id="Os10t0363300-01">
    <property type="protein sequence ID" value="Os10t0363300-01"/>
    <property type="gene ID" value="Os10g0363300"/>
</dbReference>
<dbReference type="KEGG" id="dosa:Os10g0363300"/>
<dbReference type="KEGG" id="osa:4348450"/>
<dbReference type="eggNOG" id="KOG0368">
    <property type="taxonomic scope" value="Eukaryota"/>
</dbReference>
<dbReference type="HOGENOM" id="CLU_004031_1_0_1"/>
<dbReference type="InParanoid" id="Q8S6N5"/>
<dbReference type="OrthoDB" id="196847at2759"/>
<dbReference type="UniPathway" id="UPA00655">
    <property type="reaction ID" value="UER00711"/>
</dbReference>
<dbReference type="Proteomes" id="UP000000763">
    <property type="component" value="Chromosome 10"/>
</dbReference>
<dbReference type="Proteomes" id="UP000007752">
    <property type="component" value="Chromosome 10"/>
</dbReference>
<dbReference type="Proteomes" id="UP000059680">
    <property type="component" value="Chromosome 10"/>
</dbReference>
<dbReference type="GO" id="GO:0005829">
    <property type="term" value="C:cytosol"/>
    <property type="evidence" value="ECO:0007669"/>
    <property type="project" value="UniProtKB-SubCell"/>
</dbReference>
<dbReference type="GO" id="GO:0003989">
    <property type="term" value="F:acetyl-CoA carboxylase activity"/>
    <property type="evidence" value="ECO:0000318"/>
    <property type="project" value="GO_Central"/>
</dbReference>
<dbReference type="GO" id="GO:0005524">
    <property type="term" value="F:ATP binding"/>
    <property type="evidence" value="ECO:0007669"/>
    <property type="project" value="UniProtKB-KW"/>
</dbReference>
<dbReference type="GO" id="GO:0004075">
    <property type="term" value="F:biotin carboxylase activity"/>
    <property type="evidence" value="ECO:0007669"/>
    <property type="project" value="UniProtKB-EC"/>
</dbReference>
<dbReference type="GO" id="GO:0046872">
    <property type="term" value="F:metal ion binding"/>
    <property type="evidence" value="ECO:0007669"/>
    <property type="project" value="UniProtKB-KW"/>
</dbReference>
<dbReference type="GO" id="GO:0006633">
    <property type="term" value="P:fatty acid biosynthetic process"/>
    <property type="evidence" value="ECO:0000318"/>
    <property type="project" value="GO_Central"/>
</dbReference>
<dbReference type="GO" id="GO:2001295">
    <property type="term" value="P:malonyl-CoA biosynthetic process"/>
    <property type="evidence" value="ECO:0007669"/>
    <property type="project" value="UniProtKB-UniPathway"/>
</dbReference>
<dbReference type="CDD" id="cd06850">
    <property type="entry name" value="biotinyl_domain"/>
    <property type="match status" value="1"/>
</dbReference>
<dbReference type="FunFam" id="2.40.50.100:FF:000005">
    <property type="entry name" value="Acetyl-CoA carboxylase 1"/>
    <property type="match status" value="1"/>
</dbReference>
<dbReference type="FunFam" id="3.30.470.20:FF:000043">
    <property type="entry name" value="acetyl-CoA carboxylase 1-like"/>
    <property type="match status" value="1"/>
</dbReference>
<dbReference type="FunFam" id="3.30.1490.20:FF:000003">
    <property type="entry name" value="acetyl-CoA carboxylase isoform X1"/>
    <property type="match status" value="1"/>
</dbReference>
<dbReference type="FunFam" id="3.40.50.20:FF:000005">
    <property type="entry name" value="acetyl-CoA carboxylase isoform X2"/>
    <property type="match status" value="1"/>
</dbReference>
<dbReference type="FunFam" id="3.90.226.10:FF:000010">
    <property type="entry name" value="acetyl-CoA carboxylase isoform X2"/>
    <property type="match status" value="1"/>
</dbReference>
<dbReference type="Gene3D" id="2.40.50.100">
    <property type="match status" value="1"/>
</dbReference>
<dbReference type="Gene3D" id="3.40.50.20">
    <property type="match status" value="1"/>
</dbReference>
<dbReference type="Gene3D" id="3.90.226.10">
    <property type="entry name" value="2-enoyl-CoA Hydratase, Chain A, domain 1"/>
    <property type="match status" value="2"/>
</dbReference>
<dbReference type="Gene3D" id="3.30.1490.20">
    <property type="entry name" value="ATP-grasp fold, A domain"/>
    <property type="match status" value="1"/>
</dbReference>
<dbReference type="Gene3D" id="3.30.470.20">
    <property type="entry name" value="ATP-grasp fold, B domain"/>
    <property type="match status" value="1"/>
</dbReference>
<dbReference type="Gene3D" id="2.40.460.10">
    <property type="entry name" value="Biotin dependent carboxylase carboxyltransferase"/>
    <property type="match status" value="1"/>
</dbReference>
<dbReference type="Gene3D" id="3.90.1770.10">
    <property type="entry name" value="PreATP-grasp domain"/>
    <property type="match status" value="1"/>
</dbReference>
<dbReference type="InterPro" id="IPR049076">
    <property type="entry name" value="ACCA"/>
</dbReference>
<dbReference type="InterPro" id="IPR049074">
    <property type="entry name" value="ACCA_BT"/>
</dbReference>
<dbReference type="InterPro" id="IPR034733">
    <property type="entry name" value="AcCoA_carboxyl_beta"/>
</dbReference>
<dbReference type="InterPro" id="IPR013537">
    <property type="entry name" value="AcCoA_COase_cen"/>
</dbReference>
<dbReference type="InterPro" id="IPR011761">
    <property type="entry name" value="ATP-grasp"/>
</dbReference>
<dbReference type="InterPro" id="IPR013815">
    <property type="entry name" value="ATP_grasp_subdomain_1"/>
</dbReference>
<dbReference type="InterPro" id="IPR005481">
    <property type="entry name" value="BC-like_N"/>
</dbReference>
<dbReference type="InterPro" id="IPR011764">
    <property type="entry name" value="Biotin_carboxylation_dom"/>
</dbReference>
<dbReference type="InterPro" id="IPR005482">
    <property type="entry name" value="Biotin_COase_C"/>
</dbReference>
<dbReference type="InterPro" id="IPR000089">
    <property type="entry name" value="Biotin_lipoyl"/>
</dbReference>
<dbReference type="InterPro" id="IPR005479">
    <property type="entry name" value="CbamoylP_synth_lsu-like_ATP-bd"/>
</dbReference>
<dbReference type="InterPro" id="IPR029045">
    <property type="entry name" value="ClpP/crotonase-like_dom_sf"/>
</dbReference>
<dbReference type="InterPro" id="IPR011763">
    <property type="entry name" value="COA_CT_C"/>
</dbReference>
<dbReference type="InterPro" id="IPR011762">
    <property type="entry name" value="COA_CT_N"/>
</dbReference>
<dbReference type="InterPro" id="IPR016185">
    <property type="entry name" value="PreATP-grasp_dom_sf"/>
</dbReference>
<dbReference type="InterPro" id="IPR011054">
    <property type="entry name" value="Rudment_hybrid_motif"/>
</dbReference>
<dbReference type="InterPro" id="IPR011053">
    <property type="entry name" value="Single_hybrid_motif"/>
</dbReference>
<dbReference type="PANTHER" id="PTHR45728:SF3">
    <property type="entry name" value="ACETYL-COA CARBOXYLASE"/>
    <property type="match status" value="1"/>
</dbReference>
<dbReference type="PANTHER" id="PTHR45728">
    <property type="entry name" value="ACETYL-COA CARBOXYLASE, ISOFORM A"/>
    <property type="match status" value="1"/>
</dbReference>
<dbReference type="Pfam" id="PF08326">
    <property type="entry name" value="ACC_central"/>
    <property type="match status" value="1"/>
</dbReference>
<dbReference type="Pfam" id="PF21385">
    <property type="entry name" value="ACCA_BT"/>
    <property type="match status" value="1"/>
</dbReference>
<dbReference type="Pfam" id="PF02785">
    <property type="entry name" value="Biotin_carb_C"/>
    <property type="match status" value="1"/>
</dbReference>
<dbReference type="Pfam" id="PF00289">
    <property type="entry name" value="Biotin_carb_N"/>
    <property type="match status" value="1"/>
</dbReference>
<dbReference type="Pfam" id="PF00364">
    <property type="entry name" value="Biotin_lipoyl"/>
    <property type="match status" value="1"/>
</dbReference>
<dbReference type="Pfam" id="PF01039">
    <property type="entry name" value="Carboxyl_trans"/>
    <property type="match status" value="1"/>
</dbReference>
<dbReference type="Pfam" id="PF02786">
    <property type="entry name" value="CPSase_L_D2"/>
    <property type="match status" value="1"/>
</dbReference>
<dbReference type="SMART" id="SM00878">
    <property type="entry name" value="Biotin_carb_C"/>
    <property type="match status" value="1"/>
</dbReference>
<dbReference type="SUPFAM" id="SSF52096">
    <property type="entry name" value="ClpP/crotonase"/>
    <property type="match status" value="2"/>
</dbReference>
<dbReference type="SUPFAM" id="SSF56059">
    <property type="entry name" value="Glutathione synthetase ATP-binding domain-like"/>
    <property type="match status" value="1"/>
</dbReference>
<dbReference type="SUPFAM" id="SSF52440">
    <property type="entry name" value="PreATP-grasp domain"/>
    <property type="match status" value="1"/>
</dbReference>
<dbReference type="SUPFAM" id="SSF51246">
    <property type="entry name" value="Rudiment single hybrid motif"/>
    <property type="match status" value="1"/>
</dbReference>
<dbReference type="SUPFAM" id="SSF51230">
    <property type="entry name" value="Single hybrid motif"/>
    <property type="match status" value="1"/>
</dbReference>
<dbReference type="PROSITE" id="PS50975">
    <property type="entry name" value="ATP_GRASP"/>
    <property type="match status" value="1"/>
</dbReference>
<dbReference type="PROSITE" id="PS50979">
    <property type="entry name" value="BC"/>
    <property type="match status" value="1"/>
</dbReference>
<dbReference type="PROSITE" id="PS50968">
    <property type="entry name" value="BIOTINYL_LIPOYL"/>
    <property type="match status" value="1"/>
</dbReference>
<dbReference type="PROSITE" id="PS50989">
    <property type="entry name" value="COA_CT_CTER"/>
    <property type="match status" value="1"/>
</dbReference>
<dbReference type="PROSITE" id="PS50980">
    <property type="entry name" value="COA_CT_NTER"/>
    <property type="match status" value="1"/>
</dbReference>
<dbReference type="PROSITE" id="PS00867">
    <property type="entry name" value="CPSASE_2"/>
    <property type="match status" value="1"/>
</dbReference>
<protein>
    <recommendedName>
        <fullName>Acetyl-CoA carboxylase 1</fullName>
        <ecNumber>6.4.1.2</ecNumber>
    </recommendedName>
    <domain>
        <recommendedName>
            <fullName>Biotin carboxylase</fullName>
            <ecNumber>6.3.4.14</ecNumber>
        </recommendedName>
    </domain>
</protein>
<keyword id="KW-0021">Allosteric enzyme</keyword>
<keyword id="KW-0067">ATP-binding</keyword>
<keyword id="KW-0092">Biotin</keyword>
<keyword id="KW-0963">Cytoplasm</keyword>
<keyword id="KW-0275">Fatty acid biosynthesis</keyword>
<keyword id="KW-0276">Fatty acid metabolism</keyword>
<keyword id="KW-0436">Ligase</keyword>
<keyword id="KW-0444">Lipid biosynthesis</keyword>
<keyword id="KW-0443">Lipid metabolism</keyword>
<keyword id="KW-0460">Magnesium</keyword>
<keyword id="KW-0464">Manganese</keyword>
<keyword id="KW-0479">Metal-binding</keyword>
<keyword id="KW-0511">Multifunctional enzyme</keyword>
<keyword id="KW-0547">Nucleotide-binding</keyword>
<keyword id="KW-0597">Phosphoprotein</keyword>
<keyword id="KW-1185">Reference proteome</keyword>
<sequence>MEGSYQMNGILNGMSNSRHPSSPSEVDEFCKALGGDSPIHSVLVANNGMAAVKFMRSIRTWALETFGTEKAILLVAMATPEDLKINAEHIRIADQFVEVPGGTNNNNYANVQLIVEIAERTHVSAVWPGWGHASENPELPDALKEKGIIFLGPPSAAMAALGDKIGSSLIAQAAGVPTLPWSGSHVKIPPESCNSIPEEMYRSACVSTTEEAVASCQVVGYPAMIKASWGGGGKGIRKVHNDDEVRALFKQVQGEVPGSPIFIMKVASQSRHLEVQLLCDKHGNVAALHSRDCSVQRRHQKIIEEGPITVAPSETVKELEQAARRLAKCVHYVGAATVEYLYSMETGEYYFLELNPRLQVEHPVTEWIAEINLPAAQVVVGMGVPLYNIPEIRRFYGMEHGGGYDAWRKISAVATKFDLDNAQSVKPKGHCVAVRVTSEDPDDGFKPTSGRVEELNFKSKPNVWAYFSVKSGGAIHEFSDSQFGHVFAFGESRSLAIANMVLGLKEIQIRGEIRTNVDYTVDLLNAAEYRENKIHTGWLDSRIAMRVRAERPPWYLSVVGGALYEASSRSSSVVTDYVGYLSKGQIPPKHISLVNLTVTLNIEGSKYTIETVRRGPRSYTLRMNGSEIEAEIHSLRDGGLLMQLDGNSHVIYAETEAAGTRLLINGRTCLLQKEHDPSKLLADTPCKLLRFLVADGSHVDADTPYAEVEVMKMCMPLLLPASGVIHFVMPEGQAMQAADLIARLDLDDPSSVRRAEPFHGTFPKLGPPTAVSGKVHQKFAASVNSAHMILAGYEHNINEVVQDLLNCLDSPELPFLQWQELMSVLATRLPKDLRNELDGKYKEYELNSDFRKNKDFPAKLLRGIIEANLAYCSEKDRVTNERLVEPLMSLVKSYEGGRESHARVVVKSLFEEYLSVEELFSDNIQSDVIERLRLQHAKDLEKVVYIVFSHQGVRTKNKLILRLMEALVYPNPSAYRDQLIRFSGLNNTVYSELALKASQLLEHTKLSELRTSIARSLSELEMFTEEGERVSTPRRKMAINERMEDLVGAPLAVEDALVALFDHSDPTLQRRVVETYIRRLYQPYLVKGSVRMQWHRSGLIALWEFSEEHIKQRNGQDAMSLKQQVEDPEEKRWGVMVVIKSLQYLSSAIDAALKETSHYKAGAGNVSNGNSASSSHGNMLHIALVGINNQMSTLQDSGDEDQAQERINKISKILKDSTVTSHLNGAGVRVVSCIIQRDEGRPPMRHSFQWSVDKIYYEEDPMLRHVEPPLSTFLELNKVNLDGYNEVKYTPSRDRQWHIYTLIKNKKDQRSNDQRLFLRTIVRQPGVTNGFLSGNVDNEVGRAQASSSYTSSSILRSLMAALEEIELHAHNETVRSSYSHMYLCILRVQQLFDLIPFSRTIDNVGQDEATACTLLKNMALNIYEHVGVRMHRLSVCQWEVKLWLDCDGQASGAWRVVVTNVTGHTCTVDIYREVEDSNTHKLFYHSVTPSLGPLHGIVLDEPYKPLDAIDLKRYSARKNETTYCYDFPLAFETALKRSWKSTLSVVAEANEHNKSYAKVTELMFADSTGSWGTPLVPVERSPGINDIGIVAWIMKLSTPEFPSGREIIVVSNDVTFKAGSFGPREDAFFDAVTNLACERKLPLIYLSATAGARLGVAEEIKACFNVGWSDDESPERGFHYIYLTEQDYSRLSSSVIAHELKLESGETRWVVDTIVGKEDGLGCENLHGSGAIASAYSKAYKETFTLTFVTGRAVGIGAYLARLGMRCIQRLDQPIILTGFSALNKLLGREVYSSHMQLGGPKIMATNGVVHLTVSDDLEGVSAILKWLSYVPPYVGGPLPIMKPLDPPDRPVTYFPENSCDARAAICGVQDSQGKWMGGMFDRESFVETLEGWAKTVVTGRAKLGGIPVGVIAVETQTMMQVIPADPGQLDSAERVVPQAGQVWFPDSATKTAQALLDFNREELPLFILANWRGFSGGQRDLFEGILQAGSNIVENLRTYNQPAFVYIPMGGELRGGAWVVVDSKINPEHIEMYAERTAKGNVLEPEGLVEIKFRPKELEECMLRLDPELIKLSTRLREMKKENAGLSEMDTTRRSIIARMKQLMPIYTQVATRFAELHDTSARMAAKGVIGKVVDWEESRSFFYRRLRRRVTEDALAKEIREAAGEQLSQKSALDYIKKWYLSSNGSDGNSEKWNNDEAFFAWKDDPTNYENQLEELKAERVSKWLSRLAESPDVKALPNGLSIVLNKMNPSKREQVIDGLRQLLG</sequence>
<feature type="chain" id="PRO_0000412213" description="Acetyl-CoA carboxylase 1">
    <location>
        <begin position="1"/>
        <end position="2267"/>
    </location>
</feature>
<feature type="domain" description="Biotin carboxylation">
    <location>
        <begin position="38"/>
        <end position="544"/>
    </location>
</feature>
<feature type="domain" description="ATP-grasp" evidence="4">
    <location>
        <begin position="190"/>
        <end position="384"/>
    </location>
</feature>
<feature type="domain" description="Biotinyl-binding" evidence="6">
    <location>
        <begin position="671"/>
        <end position="745"/>
    </location>
</feature>
<feature type="domain" description="CoA carboxyltransferase N-terminal" evidence="7">
    <location>
        <begin position="1502"/>
        <end position="1843"/>
    </location>
</feature>
<feature type="domain" description="CoA carboxyltransferase C-terminal" evidence="8">
    <location>
        <begin position="1847"/>
        <end position="2163"/>
    </location>
</feature>
<feature type="region of interest" description="Carboxyltransferase" evidence="9">
    <location>
        <begin position="1502"/>
        <end position="2163"/>
    </location>
</feature>
<feature type="active site" evidence="1">
    <location>
        <position position="357"/>
    </location>
</feature>
<feature type="binding site" evidence="4">
    <location>
        <begin position="216"/>
        <end position="273"/>
    </location>
    <ligand>
        <name>ATP</name>
        <dbReference type="ChEBI" id="CHEBI:30616"/>
    </ligand>
</feature>
<feature type="binding site" evidence="4 5">
    <location>
        <position position="339"/>
    </location>
    <ligand>
        <name>Mg(2+)</name>
        <dbReference type="ChEBI" id="CHEBI:18420"/>
        <label>1</label>
    </ligand>
</feature>
<feature type="binding site" evidence="4 5">
    <location>
        <position position="339"/>
    </location>
    <ligand>
        <name>Mn(2+)</name>
        <dbReference type="ChEBI" id="CHEBI:29035"/>
        <label>1</label>
    </ligand>
</feature>
<feature type="binding site" evidence="4 5">
    <location>
        <position position="353"/>
    </location>
    <ligand>
        <name>Mg(2+)</name>
        <dbReference type="ChEBI" id="CHEBI:18420"/>
        <label>1</label>
    </ligand>
</feature>
<feature type="binding site" evidence="4 5">
    <location>
        <position position="353"/>
    </location>
    <ligand>
        <name>Mg(2+)</name>
        <dbReference type="ChEBI" id="CHEBI:18420"/>
        <label>2</label>
    </ligand>
</feature>
<feature type="binding site" evidence="4 5">
    <location>
        <position position="353"/>
    </location>
    <ligand>
        <name>Mn(2+)</name>
        <dbReference type="ChEBI" id="CHEBI:29035"/>
        <label>1</label>
    </ligand>
</feature>
<feature type="binding site" evidence="4 5">
    <location>
        <position position="353"/>
    </location>
    <ligand>
        <name>Mn(2+)</name>
        <dbReference type="ChEBI" id="CHEBI:29035"/>
        <label>2</label>
    </ligand>
</feature>
<feature type="binding site" evidence="4 5">
    <location>
        <position position="355"/>
    </location>
    <ligand>
        <name>Mg(2+)</name>
        <dbReference type="ChEBI" id="CHEBI:18420"/>
        <label>2</label>
    </ligand>
</feature>
<feature type="binding site" evidence="4 5">
    <location>
        <position position="355"/>
    </location>
    <ligand>
        <name>Mn(2+)</name>
        <dbReference type="ChEBI" id="CHEBI:29035"/>
        <label>2</label>
    </ligand>
</feature>
<feature type="binding site" evidence="1">
    <location>
        <position position="1752"/>
    </location>
    <ligand>
        <name>CoA</name>
        <dbReference type="ChEBI" id="CHEBI:57287"/>
    </ligand>
</feature>
<feature type="binding site" evidence="1">
    <location>
        <position position="2053"/>
    </location>
    <ligand>
        <name>CoA</name>
        <dbReference type="ChEBI" id="CHEBI:57287"/>
    </ligand>
</feature>
<feature type="binding site" evidence="1">
    <location>
        <position position="2055"/>
    </location>
    <ligand>
        <name>CoA</name>
        <dbReference type="ChEBI" id="CHEBI:57287"/>
    </ligand>
</feature>
<feature type="modified residue" description="N6-biotinyllysine" evidence="6">
    <location>
        <position position="712"/>
    </location>
</feature>
<gene>
    <name type="primary">ACC1</name>
    <name type="ordered locus">Os10g0363300</name>
    <name type="ordered locus">LOC_Os10g21910</name>
    <name type="ORF">OsJ_31236</name>
    <name type="ORF">OSJNBa0073L01.2</name>
</gene>
<reference key="1">
    <citation type="journal article" date="2003" name="Science">
        <title>In-depth view of structure, activity, and evolution of rice chromosome 10.</title>
        <authorList>
            <person name="Yu Y."/>
            <person name="Rambo T."/>
            <person name="Currie J."/>
            <person name="Saski C."/>
            <person name="Kim H.-R."/>
            <person name="Collura K."/>
            <person name="Thompson S."/>
            <person name="Simmons J."/>
            <person name="Yang T.-J."/>
            <person name="Nah G."/>
            <person name="Patel A.J."/>
            <person name="Thurmond S."/>
            <person name="Henry D."/>
            <person name="Oates R."/>
            <person name="Palmer M."/>
            <person name="Pries G."/>
            <person name="Gibson J."/>
            <person name="Anderson H."/>
            <person name="Paradkar M."/>
            <person name="Crane L."/>
            <person name="Dale J."/>
            <person name="Carver M.B."/>
            <person name="Wood T."/>
            <person name="Frisch D."/>
            <person name="Engler F."/>
            <person name="Soderlund C."/>
            <person name="Palmer L.E."/>
            <person name="Teytelman L."/>
            <person name="Nascimento L."/>
            <person name="De la Bastide M."/>
            <person name="Spiegel L."/>
            <person name="Ware D."/>
            <person name="O'Shaughnessy A."/>
            <person name="Dike S."/>
            <person name="Dedhia N."/>
            <person name="Preston R."/>
            <person name="Huang E."/>
            <person name="Ferraro K."/>
            <person name="Kuit K."/>
            <person name="Miller B."/>
            <person name="Zutavern T."/>
            <person name="Katzenberger F."/>
            <person name="Muller S."/>
            <person name="Balija V."/>
            <person name="Martienssen R.A."/>
            <person name="Stein L."/>
            <person name="Minx P."/>
            <person name="Johnson D."/>
            <person name="Cordum H."/>
            <person name="Mardis E."/>
            <person name="Cheng Z."/>
            <person name="Jiang J."/>
            <person name="Wilson R."/>
            <person name="McCombie W.R."/>
            <person name="Wing R.A."/>
            <person name="Yuan Q."/>
            <person name="Ouyang S."/>
            <person name="Liu J."/>
            <person name="Jones K.M."/>
            <person name="Gansberger K."/>
            <person name="Moffat K."/>
            <person name="Hill J."/>
            <person name="Tsitrin T."/>
            <person name="Overton L."/>
            <person name="Bera J."/>
            <person name="Kim M."/>
            <person name="Jin S."/>
            <person name="Tallon L."/>
            <person name="Ciecko A."/>
            <person name="Pai G."/>
            <person name="Van Aken S."/>
            <person name="Utterback T."/>
            <person name="Reidmuller S."/>
            <person name="Bormann J."/>
            <person name="Feldblyum T."/>
            <person name="Hsiao J."/>
            <person name="Zismann V."/>
            <person name="Blunt S."/>
            <person name="de Vazeille A.R."/>
            <person name="Shaffer T."/>
            <person name="Koo H."/>
            <person name="Suh B."/>
            <person name="Yang Q."/>
            <person name="Haas B."/>
            <person name="Peterson J."/>
            <person name="Pertea M."/>
            <person name="Volfovsky N."/>
            <person name="Wortman J."/>
            <person name="White O."/>
            <person name="Salzberg S.L."/>
            <person name="Fraser C.M."/>
            <person name="Buell C.R."/>
            <person name="Messing J."/>
            <person name="Song R."/>
            <person name="Fuks G."/>
            <person name="Llaca V."/>
            <person name="Kovchak S."/>
            <person name="Young S."/>
            <person name="Bowers J.E."/>
            <person name="Paterson A.H."/>
            <person name="Johns M.A."/>
            <person name="Mao L."/>
            <person name="Pan H."/>
            <person name="Dean R.A."/>
        </authorList>
    </citation>
    <scope>NUCLEOTIDE SEQUENCE [LARGE SCALE GENOMIC DNA]</scope>
    <source>
        <strain>cv. Nipponbare</strain>
    </source>
</reference>
<reference key="2">
    <citation type="journal article" date="2005" name="Nature">
        <title>The map-based sequence of the rice genome.</title>
        <authorList>
            <consortium name="International rice genome sequencing project (IRGSP)"/>
        </authorList>
    </citation>
    <scope>NUCLEOTIDE SEQUENCE [LARGE SCALE GENOMIC DNA]</scope>
    <source>
        <strain>cv. Nipponbare</strain>
    </source>
</reference>
<reference key="3">
    <citation type="journal article" date="2008" name="Nucleic Acids Res.">
        <title>The rice annotation project database (RAP-DB): 2008 update.</title>
        <authorList>
            <consortium name="The rice annotation project (RAP)"/>
        </authorList>
    </citation>
    <scope>GENOME REANNOTATION</scope>
    <source>
        <strain>cv. Nipponbare</strain>
    </source>
</reference>
<reference key="4">
    <citation type="journal article" date="2013" name="Rice">
        <title>Improvement of the Oryza sativa Nipponbare reference genome using next generation sequence and optical map data.</title>
        <authorList>
            <person name="Kawahara Y."/>
            <person name="de la Bastide M."/>
            <person name="Hamilton J.P."/>
            <person name="Kanamori H."/>
            <person name="McCombie W.R."/>
            <person name="Ouyang S."/>
            <person name="Schwartz D.C."/>
            <person name="Tanaka T."/>
            <person name="Wu J."/>
            <person name="Zhou S."/>
            <person name="Childs K.L."/>
            <person name="Davidson R.M."/>
            <person name="Lin H."/>
            <person name="Quesada-Ocampo L."/>
            <person name="Vaillancourt B."/>
            <person name="Sakai H."/>
            <person name="Lee S.S."/>
            <person name="Kim J."/>
            <person name="Numa H."/>
            <person name="Itoh T."/>
            <person name="Buell C.R."/>
            <person name="Matsumoto T."/>
        </authorList>
    </citation>
    <scope>GENOME REANNOTATION</scope>
    <source>
        <strain>cv. Nipponbare</strain>
    </source>
</reference>
<reference key="5">
    <citation type="journal article" date="2005" name="PLoS Biol.">
        <title>The genomes of Oryza sativa: a history of duplications.</title>
        <authorList>
            <person name="Yu J."/>
            <person name="Wang J."/>
            <person name="Lin W."/>
            <person name="Li S."/>
            <person name="Li H."/>
            <person name="Zhou J."/>
            <person name="Ni P."/>
            <person name="Dong W."/>
            <person name="Hu S."/>
            <person name="Zeng C."/>
            <person name="Zhang J."/>
            <person name="Zhang Y."/>
            <person name="Li R."/>
            <person name="Xu Z."/>
            <person name="Li S."/>
            <person name="Li X."/>
            <person name="Zheng H."/>
            <person name="Cong L."/>
            <person name="Lin L."/>
            <person name="Yin J."/>
            <person name="Geng J."/>
            <person name="Li G."/>
            <person name="Shi J."/>
            <person name="Liu J."/>
            <person name="Lv H."/>
            <person name="Li J."/>
            <person name="Wang J."/>
            <person name="Deng Y."/>
            <person name="Ran L."/>
            <person name="Shi X."/>
            <person name="Wang X."/>
            <person name="Wu Q."/>
            <person name="Li C."/>
            <person name="Ren X."/>
            <person name="Wang J."/>
            <person name="Wang X."/>
            <person name="Li D."/>
            <person name="Liu D."/>
            <person name="Zhang X."/>
            <person name="Ji Z."/>
            <person name="Zhao W."/>
            <person name="Sun Y."/>
            <person name="Zhang Z."/>
            <person name="Bao J."/>
            <person name="Han Y."/>
            <person name="Dong L."/>
            <person name="Ji J."/>
            <person name="Chen P."/>
            <person name="Wu S."/>
            <person name="Liu J."/>
            <person name="Xiao Y."/>
            <person name="Bu D."/>
            <person name="Tan J."/>
            <person name="Yang L."/>
            <person name="Ye C."/>
            <person name="Zhang J."/>
            <person name="Xu J."/>
            <person name="Zhou Y."/>
            <person name="Yu Y."/>
            <person name="Zhang B."/>
            <person name="Zhuang S."/>
            <person name="Wei H."/>
            <person name="Liu B."/>
            <person name="Lei M."/>
            <person name="Yu H."/>
            <person name="Li Y."/>
            <person name="Xu H."/>
            <person name="Wei S."/>
            <person name="He X."/>
            <person name="Fang L."/>
            <person name="Zhang Z."/>
            <person name="Zhang Y."/>
            <person name="Huang X."/>
            <person name="Su Z."/>
            <person name="Tong W."/>
            <person name="Li J."/>
            <person name="Tong Z."/>
            <person name="Li S."/>
            <person name="Ye J."/>
            <person name="Wang L."/>
            <person name="Fang L."/>
            <person name="Lei T."/>
            <person name="Chen C.-S."/>
            <person name="Chen H.-C."/>
            <person name="Xu Z."/>
            <person name="Li H."/>
            <person name="Huang H."/>
            <person name="Zhang F."/>
            <person name="Xu H."/>
            <person name="Li N."/>
            <person name="Zhao C."/>
            <person name="Li S."/>
            <person name="Dong L."/>
            <person name="Huang Y."/>
            <person name="Li L."/>
            <person name="Xi Y."/>
            <person name="Qi Q."/>
            <person name="Li W."/>
            <person name="Zhang B."/>
            <person name="Hu W."/>
            <person name="Zhang Y."/>
            <person name="Tian X."/>
            <person name="Jiao Y."/>
            <person name="Liang X."/>
            <person name="Jin J."/>
            <person name="Gao L."/>
            <person name="Zheng W."/>
            <person name="Hao B."/>
            <person name="Liu S.-M."/>
            <person name="Wang W."/>
            <person name="Yuan L."/>
            <person name="Cao M."/>
            <person name="McDermott J."/>
            <person name="Samudrala R."/>
            <person name="Wang J."/>
            <person name="Wong G.K.-S."/>
            <person name="Yang H."/>
        </authorList>
    </citation>
    <scope>NUCLEOTIDE SEQUENCE [LARGE SCALE GENOMIC DNA]</scope>
    <source>
        <strain>cv. Nipponbare</strain>
    </source>
</reference>
<proteinExistence type="inferred from homology"/>